<keyword id="KW-0031">Aminopeptidase</keyword>
<keyword id="KW-0963">Cytoplasm</keyword>
<keyword id="KW-0903">Direct protein sequencing</keyword>
<keyword id="KW-0378">Hydrolase</keyword>
<keyword id="KW-0645">Protease</keyword>
<organism>
    <name type="scientific">Neisseria gonorrhoeae</name>
    <dbReference type="NCBI Taxonomy" id="485"/>
    <lineage>
        <taxon>Bacteria</taxon>
        <taxon>Pseudomonadati</taxon>
        <taxon>Pseudomonadota</taxon>
        <taxon>Betaproteobacteria</taxon>
        <taxon>Neisseriales</taxon>
        <taxon>Neisseriaceae</taxon>
        <taxon>Neisseria</taxon>
    </lineage>
</organism>
<gene>
    <name type="primary">pip</name>
</gene>
<sequence length="310" mass="34792">MYEIKQPFHSGYLQVSEIHQIYWEESGNPDGVPVIFLHGGPGAGASPECRGFFNPDVFRIVIIDQRGCGRSHPYACAEDNTTWDLVADIEKVREMLGIGKWLVFGGSWGSTLSLAYAQTHPERVKGLVLRGIFLCRPSETAWLNEAGGVSRIYPEQWQKFVAPIAENRRNRLIEAYHGLLFHQDEEVCLSAAKAWADWESYLIRFEPEGVDEDAYASLAIARLENHYFVNGGWLQGDKAILNNIGKIRHIPTVIVQGRYDLCTPMQSAWELSKAFPEAELRVVQAGHCAFDPPLADALVQAVEDILPRLL</sequence>
<comment type="function">
    <text>Hydrolyzes peptides having the structure Pro-Y-Z to yield free proline. Also hydrolyzes the dipeptide Pro-Gly.</text>
</comment>
<comment type="catalytic activity">
    <reaction>
        <text>Release of N-terminal proline from a peptide.</text>
        <dbReference type="EC" id="3.4.11.5"/>
    </reaction>
</comment>
<comment type="subcellular location">
    <subcellularLocation>
        <location evidence="3">Cytoplasm</location>
    </subcellularLocation>
</comment>
<comment type="similarity">
    <text evidence="3">Belongs to the peptidase S33 family.</text>
</comment>
<accession>P42786</accession>
<protein>
    <recommendedName>
        <fullName>Proline iminopeptidase</fullName>
        <shortName>PIP</shortName>
        <ecNumber>3.4.11.5</ecNumber>
    </recommendedName>
    <alternativeName>
        <fullName>Prolyl aminopeptidase</fullName>
        <shortName>PAP</shortName>
    </alternativeName>
</protein>
<reference key="1">
    <citation type="journal article" date="1993" name="Mol. Microbiol.">
        <title>Molecular cloning and characterization of a proline iminopeptidase gene from Neisseria gonorrhoeae.</title>
        <authorList>
            <person name="Albertson N.H."/>
            <person name="Koomey M."/>
        </authorList>
    </citation>
    <scope>NUCLEOTIDE SEQUENCE [GENOMIC DNA]</scope>
    <scope>PROTEIN SEQUENCE OF 1-10</scope>
    <source>
        <strain>MS11 / MSO1-1X</strain>
    </source>
</reference>
<feature type="chain" id="PRO_0000080841" description="Proline iminopeptidase">
    <location>
        <begin position="1"/>
        <end position="310"/>
    </location>
</feature>
<feature type="domain" description="AB hydrolase-1" evidence="2">
    <location>
        <begin position="33"/>
        <end position="290"/>
    </location>
</feature>
<feature type="active site" description="Nucleophile" evidence="1">
    <location>
        <position position="107"/>
    </location>
</feature>
<feature type="active site" evidence="1">
    <location>
        <position position="260"/>
    </location>
</feature>
<feature type="active site" description="Proton donor" evidence="1">
    <location>
        <position position="287"/>
    </location>
</feature>
<dbReference type="EC" id="3.4.11.5"/>
<dbReference type="EMBL" id="Z25461">
    <property type="protein sequence ID" value="CAA80948.1"/>
    <property type="molecule type" value="Genomic_DNA"/>
</dbReference>
<dbReference type="PIR" id="S39592">
    <property type="entry name" value="S39592"/>
</dbReference>
<dbReference type="RefSeq" id="WP_003688351.1">
    <property type="nucleotide sequence ID" value="NZ_WHPL01000002.1"/>
</dbReference>
<dbReference type="SMR" id="P42786"/>
<dbReference type="ESTHER" id="neigo-pip">
    <property type="family name" value="Proline_iminopeptidase"/>
</dbReference>
<dbReference type="MEROPS" id="S33.001"/>
<dbReference type="GO" id="GO:0005737">
    <property type="term" value="C:cytoplasm"/>
    <property type="evidence" value="ECO:0007669"/>
    <property type="project" value="UniProtKB-SubCell"/>
</dbReference>
<dbReference type="GO" id="GO:0004177">
    <property type="term" value="F:aminopeptidase activity"/>
    <property type="evidence" value="ECO:0007669"/>
    <property type="project" value="UniProtKB-KW"/>
</dbReference>
<dbReference type="GO" id="GO:0006508">
    <property type="term" value="P:proteolysis"/>
    <property type="evidence" value="ECO:0007669"/>
    <property type="project" value="UniProtKB-KW"/>
</dbReference>
<dbReference type="Gene3D" id="3.40.50.1820">
    <property type="entry name" value="alpha/beta hydrolase"/>
    <property type="match status" value="1"/>
</dbReference>
<dbReference type="InterPro" id="IPR000073">
    <property type="entry name" value="AB_hydrolase_1"/>
</dbReference>
<dbReference type="InterPro" id="IPR029058">
    <property type="entry name" value="AB_hydrolase_fold"/>
</dbReference>
<dbReference type="InterPro" id="IPR002410">
    <property type="entry name" value="Peptidase_S33"/>
</dbReference>
<dbReference type="InterPro" id="IPR005944">
    <property type="entry name" value="Pro_iminopeptidase"/>
</dbReference>
<dbReference type="NCBIfam" id="TIGR01249">
    <property type="entry name" value="pro_imino_pep_1"/>
    <property type="match status" value="1"/>
</dbReference>
<dbReference type="PANTHER" id="PTHR43722">
    <property type="entry name" value="PROLINE IMINOPEPTIDASE"/>
    <property type="match status" value="1"/>
</dbReference>
<dbReference type="PANTHER" id="PTHR43722:SF1">
    <property type="entry name" value="PROLINE IMINOPEPTIDASE"/>
    <property type="match status" value="1"/>
</dbReference>
<dbReference type="Pfam" id="PF00561">
    <property type="entry name" value="Abhydrolase_1"/>
    <property type="match status" value="1"/>
</dbReference>
<dbReference type="PIRSF" id="PIRSF006431">
    <property type="entry name" value="Pept_S33"/>
    <property type="match status" value="1"/>
</dbReference>
<dbReference type="PRINTS" id="PR00111">
    <property type="entry name" value="ABHYDROLASE"/>
</dbReference>
<dbReference type="PRINTS" id="PR00793">
    <property type="entry name" value="PROAMNOPTASE"/>
</dbReference>
<dbReference type="SUPFAM" id="SSF53474">
    <property type="entry name" value="alpha/beta-Hydrolases"/>
    <property type="match status" value="1"/>
</dbReference>
<name>PIP_NEIGO</name>
<proteinExistence type="evidence at protein level"/>
<evidence type="ECO:0000250" key="1"/>
<evidence type="ECO:0000255" key="2"/>
<evidence type="ECO:0000305" key="3"/>